<accession>P0DTG8</accession>
<proteinExistence type="inferred from homology"/>
<reference key="1">
    <citation type="journal article" date="2013" name="Science">
        <title>Comparative analysis of bat genomes provides insight into the evolution of flight and immunity.</title>
        <authorList>
            <person name="Zhang G."/>
            <person name="Cowled C."/>
            <person name="Shi Z."/>
            <person name="Huang Z."/>
            <person name="Bishop-Lilly K.A."/>
            <person name="Fang X."/>
            <person name="Wynne J.W."/>
            <person name="Xiong Z."/>
            <person name="Baker M.L."/>
            <person name="Zhao W."/>
            <person name="Tachedjian M."/>
            <person name="Zhu Y."/>
            <person name="Zhou P."/>
            <person name="Jiang X."/>
            <person name="Ng J."/>
            <person name="Yang L."/>
            <person name="Wu L."/>
            <person name="Xiao J."/>
            <person name="Feng Y."/>
            <person name="Chen Y."/>
            <person name="Sun X."/>
            <person name="Zhang Y."/>
            <person name="Marsh G.A."/>
            <person name="Crameri G."/>
            <person name="Broder C.C."/>
            <person name="Frey K.G."/>
            <person name="Wang L.F."/>
            <person name="Wang J."/>
        </authorList>
    </citation>
    <scope>NUCLEOTIDE SEQUENCE [LARGE SCALE GENOMIC DNA]</scope>
</reference>
<reference key="2">
    <citation type="unpublished observations" date="2021-01">
        <authorList>
            <person name="Puppione D.L."/>
        </authorList>
    </citation>
    <scope>IDENTIFICATION</scope>
</reference>
<keyword id="KW-0445">Lipid transport</keyword>
<keyword id="KW-0964">Secreted</keyword>
<keyword id="KW-0732">Signal</keyword>
<keyword id="KW-0813">Transport</keyword>
<keyword id="KW-0850">VLDL</keyword>
<feature type="signal peptide" evidence="4">
    <location>
        <begin position="1"/>
        <end position="26"/>
    </location>
</feature>
<feature type="chain" id="PRO_0000452421" description="Apolipoprotein C-I">
    <location>
        <begin position="27"/>
        <end position="87"/>
    </location>
</feature>
<feature type="chain" id="PRO_0000452422" description="Truncated apolipoprotein C-I" evidence="3">
    <location>
        <begin position="29"/>
        <end position="87"/>
    </location>
</feature>
<name>APOC1_PTEAL</name>
<organism>
    <name type="scientific">Pteropus alecto</name>
    <name type="common">Black flying fox</name>
    <dbReference type="NCBI Taxonomy" id="9402"/>
    <lineage>
        <taxon>Eukaryota</taxon>
        <taxon>Metazoa</taxon>
        <taxon>Chordata</taxon>
        <taxon>Craniata</taxon>
        <taxon>Vertebrata</taxon>
        <taxon>Euteleostomi</taxon>
        <taxon>Mammalia</taxon>
        <taxon>Eutheria</taxon>
        <taxon>Laurasiatheria</taxon>
        <taxon>Chiroptera</taxon>
        <taxon>Yinpterochiroptera</taxon>
        <taxon>Pteropodoidea</taxon>
        <taxon>Pteropodidae</taxon>
        <taxon>Pteropodinae</taxon>
        <taxon>Pteropus</taxon>
    </lineage>
</organism>
<comment type="function">
    <text evidence="1 2">Inhibitor of lipoprotein binding to the low density lipoprotein (LDL) receptor, LDL receptor-related protein, and very low density lipoprotein (VLDL) receptor. Associates with high density lipoproteins (HDL) and the triacylglycerol-rich lipoproteins in the plasma and makes up about 10% of the protein of the VLDL and 2% of that of HDL. Appears to interfere directly with fatty acid uptake and is also the major plasma inhibitor of cholesteryl ester transfer protein (CETP). Binds free fatty acids and reduces their intracellular esterification. Modulates the interaction of APOE with beta-migrating VLDL and inhibits binding of beta-VLDL to the LDL receptor-related protein.</text>
</comment>
<comment type="subcellular location">
    <subcellularLocation>
        <location evidence="1">Secreted</location>
    </subcellularLocation>
</comment>
<comment type="similarity">
    <text evidence="5">Belongs to the apolipoprotein C1 family.</text>
</comment>
<gene>
    <name type="primary">APOC1</name>
</gene>
<evidence type="ECO:0000250" key="1">
    <source>
        <dbReference type="UniProtKB" id="P02654"/>
    </source>
</evidence>
<evidence type="ECO:0000250" key="2">
    <source>
        <dbReference type="UniProtKB" id="P33047"/>
    </source>
</evidence>
<evidence type="ECO:0000250" key="3">
    <source>
        <dbReference type="UniProtKB" id="P86336"/>
    </source>
</evidence>
<evidence type="ECO:0000255" key="4"/>
<evidence type="ECO:0000305" key="5"/>
<protein>
    <recommendedName>
        <fullName>Apolipoprotein C-I</fullName>
        <shortName>Apo-CI</shortName>
        <shortName>ApoC-I</shortName>
    </recommendedName>
    <alternativeName>
        <fullName>Apolipoprotein C1</fullName>
    </alternativeName>
    <component>
        <recommendedName>
            <fullName>Truncated apolipoprotein C-I</fullName>
        </recommendedName>
    </component>
</protein>
<dbReference type="EMBL" id="ALWS01042706">
    <property type="status" value="NOT_ANNOTATED_CDS"/>
    <property type="molecule type" value="Genomic_DNA"/>
</dbReference>
<dbReference type="RefSeq" id="XP_015444802.1">
    <property type="nucleotide sequence ID" value="XM_015589316.1"/>
</dbReference>
<dbReference type="RefSeq" id="XP_024902564.1">
    <property type="nucleotide sequence ID" value="XM_025046796.1"/>
</dbReference>
<dbReference type="SMR" id="P0DTG8"/>
<dbReference type="GeneID" id="102885668"/>
<dbReference type="InParanoid" id="P0DTG8"/>
<dbReference type="GO" id="GO:0034364">
    <property type="term" value="C:high-density lipoprotein particle"/>
    <property type="evidence" value="ECO:0007669"/>
    <property type="project" value="TreeGrafter"/>
</dbReference>
<dbReference type="GO" id="GO:0034361">
    <property type="term" value="C:very-low-density lipoprotein particle"/>
    <property type="evidence" value="ECO:0007669"/>
    <property type="project" value="UniProtKB-KW"/>
</dbReference>
<dbReference type="GO" id="GO:0005504">
    <property type="term" value="F:fatty acid binding"/>
    <property type="evidence" value="ECO:0007669"/>
    <property type="project" value="TreeGrafter"/>
</dbReference>
<dbReference type="GO" id="GO:0004859">
    <property type="term" value="F:phospholipase inhibitor activity"/>
    <property type="evidence" value="ECO:0007669"/>
    <property type="project" value="TreeGrafter"/>
</dbReference>
<dbReference type="GO" id="GO:0006869">
    <property type="term" value="P:lipid transport"/>
    <property type="evidence" value="ECO:0007669"/>
    <property type="project" value="UniProtKB-KW"/>
</dbReference>
<dbReference type="GO" id="GO:0042157">
    <property type="term" value="P:lipoprotein metabolic process"/>
    <property type="evidence" value="ECO:0007669"/>
    <property type="project" value="InterPro"/>
</dbReference>
<dbReference type="GO" id="GO:0032375">
    <property type="term" value="P:negative regulation of cholesterol transport"/>
    <property type="evidence" value="ECO:0007669"/>
    <property type="project" value="TreeGrafter"/>
</dbReference>
<dbReference type="GO" id="GO:0050995">
    <property type="term" value="P:negative regulation of lipid catabolic process"/>
    <property type="evidence" value="ECO:0007669"/>
    <property type="project" value="TreeGrafter"/>
</dbReference>
<dbReference type="GO" id="GO:0010916">
    <property type="term" value="P:negative regulation of very-low-density lipoprotein particle clearance"/>
    <property type="evidence" value="ECO:0007669"/>
    <property type="project" value="TreeGrafter"/>
</dbReference>
<dbReference type="GO" id="GO:0006641">
    <property type="term" value="P:triglyceride metabolic process"/>
    <property type="evidence" value="ECO:0007669"/>
    <property type="project" value="TreeGrafter"/>
</dbReference>
<dbReference type="GO" id="GO:0034447">
    <property type="term" value="P:very-low-density lipoprotein particle clearance"/>
    <property type="evidence" value="ECO:0007669"/>
    <property type="project" value="TreeGrafter"/>
</dbReference>
<dbReference type="Gene3D" id="4.10.260.30">
    <property type="entry name" value="Apolipoprotein C-I"/>
    <property type="match status" value="1"/>
</dbReference>
<dbReference type="InterPro" id="IPR043081">
    <property type="entry name" value="ApoC-1_sf"/>
</dbReference>
<dbReference type="InterPro" id="IPR006781">
    <property type="entry name" value="ApoC-I"/>
</dbReference>
<dbReference type="PANTHER" id="PTHR16565">
    <property type="entry name" value="APOLIPOPROTEIN C-I"/>
    <property type="match status" value="1"/>
</dbReference>
<dbReference type="PANTHER" id="PTHR16565:SF2">
    <property type="entry name" value="APOLIPOPROTEIN C-I"/>
    <property type="match status" value="1"/>
</dbReference>
<dbReference type="Pfam" id="PF04691">
    <property type="entry name" value="ApoC-I"/>
    <property type="match status" value="1"/>
</dbReference>
<sequence>MRFILSLPVLAVVLAMVLEGPAPAQADPDISSSLESIPGKLKEFGSTVEEKFRTAIDQIKKSEFSEKTQNWFSELFHKVKEKFETTF</sequence>